<sequence>MSEQQTASLGEFTFECGESIPDLELAYETYGEFTGDNAVLVCHALTGSAHVAGGRRRSDTSGQAHAWWDDIVGPGKAVDTTDYYVICANIPGSCYGSSGPPSTNPETGEPWGTTFPAVTVGDWTRAQRRLLDHLGVPHLHAVVGGSVGGMNVLDWAKRHPDHVNRVAVVAAAARLDPQCLALDAIARRAITTDPNWNGGDYYGEDPPVEGLALARQIGHVMYLSKSSMQDKFGRRSSGIDAGRDSFEMDPAAGFFPYREVESYLDYQGEKFARRFDANSYLYLTRAMDNYDLASGYESDRDALAAFDGEALLISFTGDWHFTVEQSEAVADAFRESGTDTAHHVVDSDHGHDAFLVEPDRVGPPLDDFLVDGVAGKAVSDTTPDDDDGDEFAPVHTSLFSD</sequence>
<comment type="function">
    <text evidence="1 2">Transfers an acetyl group from acetyl-CoA to L-homoserine, forming acetyl-L-homoserine.</text>
</comment>
<comment type="catalytic activity">
    <reaction evidence="1 2">
        <text>L-homoserine + acetyl-CoA = O-acetyl-L-homoserine + CoA</text>
        <dbReference type="Rhea" id="RHEA:13701"/>
        <dbReference type="ChEBI" id="CHEBI:57287"/>
        <dbReference type="ChEBI" id="CHEBI:57288"/>
        <dbReference type="ChEBI" id="CHEBI:57476"/>
        <dbReference type="ChEBI" id="CHEBI:57716"/>
        <dbReference type="EC" id="2.3.1.31"/>
    </reaction>
</comment>
<comment type="pathway">
    <text evidence="1">Amino-acid biosynthesis; L-methionine biosynthesis via de novo pathway; O-acetyl-L-homoserine from L-homoserine: step 1/1.</text>
</comment>
<comment type="subunit">
    <text evidence="1">Homodimer.</text>
</comment>
<comment type="subcellular location">
    <subcellularLocation>
        <location evidence="1">Cytoplasm</location>
    </subcellularLocation>
</comment>
<comment type="similarity">
    <text evidence="1">Belongs to the AB hydrolase superfamily. MetX family.</text>
</comment>
<organism>
    <name type="scientific">Natronomonas pharaonis (strain ATCC 35678 / DSM 2160 / CIP 103997 / JCM 8858 / NBRC 14720 / NCIMB 2260 / Gabara)</name>
    <name type="common">Halobacterium pharaonis</name>
    <dbReference type="NCBI Taxonomy" id="348780"/>
    <lineage>
        <taxon>Archaea</taxon>
        <taxon>Methanobacteriati</taxon>
        <taxon>Methanobacteriota</taxon>
        <taxon>Stenosarchaea group</taxon>
        <taxon>Halobacteria</taxon>
        <taxon>Halobacteriales</taxon>
        <taxon>Haloarculaceae</taxon>
        <taxon>Natronomonas</taxon>
    </lineage>
</organism>
<keyword id="KW-0012">Acyltransferase</keyword>
<keyword id="KW-0028">Amino-acid biosynthesis</keyword>
<keyword id="KW-0963">Cytoplasm</keyword>
<keyword id="KW-0486">Methionine biosynthesis</keyword>
<keyword id="KW-1185">Reference proteome</keyword>
<keyword id="KW-0808">Transferase</keyword>
<gene>
    <name evidence="1 3" type="primary">metXA</name>
    <name type="ordered locus">NP_0282A</name>
</gene>
<accession>Q3IUE8</accession>
<proteinExistence type="evidence at protein level"/>
<name>METXA_NATPD</name>
<reference key="1">
    <citation type="journal article" date="2005" name="Genome Res.">
        <title>Living with two extremes: conclusions from the genome sequence of Natronomonas pharaonis.</title>
        <authorList>
            <person name="Falb M."/>
            <person name="Pfeiffer F."/>
            <person name="Palm P."/>
            <person name="Rodewald K."/>
            <person name="Hickmann V."/>
            <person name="Tittor J."/>
            <person name="Oesterhelt D."/>
        </authorList>
    </citation>
    <scope>NUCLEOTIDE SEQUENCE [LARGE SCALE GENOMIC DNA]</scope>
    <source>
        <strain>ATCC 35678 / DSM 2160 / CIP 103997 / JCM 8858 / NBRC 14720 / NCIMB 2260 / Gabara</strain>
    </source>
</reference>
<reference key="2">
    <citation type="journal article" date="2017" name="Nat. Chem. Biol.">
        <title>Parallel evolution of non-homologous isofunctional enzymes in methionine biosynthesis.</title>
        <authorList>
            <person name="Bastard K."/>
            <person name="Perret A."/>
            <person name="Mariage A."/>
            <person name="Bessonnet T."/>
            <person name="Pinet-Turpault A."/>
            <person name="Petit J.L."/>
            <person name="Darii E."/>
            <person name="Bazire P."/>
            <person name="Vergne-Vaxelaire C."/>
            <person name="Brewee C."/>
            <person name="Debard A."/>
            <person name="Pellouin V."/>
            <person name="Besnard-Gonnet M."/>
            <person name="Artiguenave F."/>
            <person name="Medigue C."/>
            <person name="Vallenet D."/>
            <person name="Danchin A."/>
            <person name="Zaparucha A."/>
            <person name="Weissenbach J."/>
            <person name="Salanoubat M."/>
            <person name="de Berardinis V."/>
        </authorList>
    </citation>
    <scope>FUNCTION</scope>
    <scope>CATALYTIC ACTIVITY</scope>
</reference>
<feature type="chain" id="PRO_0000231893" description="Homoserine O-acetyltransferase">
    <location>
        <begin position="1"/>
        <end position="401"/>
    </location>
</feature>
<feature type="domain" description="AB hydrolase-1" evidence="1">
    <location>
        <begin position="37"/>
        <end position="358"/>
    </location>
</feature>
<feature type="active site" description="Nucleophile" evidence="1">
    <location>
        <position position="146"/>
    </location>
</feature>
<feature type="active site" evidence="1">
    <location>
        <position position="318"/>
    </location>
</feature>
<feature type="active site" evidence="1">
    <location>
        <position position="351"/>
    </location>
</feature>
<feature type="binding site" evidence="1">
    <location>
        <position position="215"/>
    </location>
    <ligand>
        <name>substrate</name>
    </ligand>
</feature>
<feature type="binding site" evidence="1">
    <location>
        <position position="352"/>
    </location>
    <ligand>
        <name>substrate</name>
    </ligand>
</feature>
<evidence type="ECO:0000255" key="1">
    <source>
        <dbReference type="HAMAP-Rule" id="MF_00296"/>
    </source>
</evidence>
<evidence type="ECO:0000269" key="2">
    <source>
    </source>
</evidence>
<evidence type="ECO:0000303" key="3">
    <source>
    </source>
</evidence>
<protein>
    <recommendedName>
        <fullName evidence="1">Homoserine O-acetyltransferase</fullName>
        <shortName evidence="1 3">HAT</shortName>
        <ecNumber evidence="1 2">2.3.1.31</ecNumber>
    </recommendedName>
    <alternativeName>
        <fullName evidence="1">Homoserine transacetylase</fullName>
        <shortName evidence="1">HTA</shortName>
    </alternativeName>
</protein>
<dbReference type="EC" id="2.3.1.31" evidence="1 2"/>
<dbReference type="EMBL" id="CR936257">
    <property type="protein sequence ID" value="CAI48232.1"/>
    <property type="molecule type" value="Genomic_DNA"/>
</dbReference>
<dbReference type="RefSeq" id="WP_011321871.1">
    <property type="nucleotide sequence ID" value="NC_007426.1"/>
</dbReference>
<dbReference type="SMR" id="Q3IUE8"/>
<dbReference type="STRING" id="348780.NP_0282A"/>
<dbReference type="ESTHER" id="natpd-metx">
    <property type="family name" value="Homoserine_transacetylase"/>
</dbReference>
<dbReference type="EnsemblBacteria" id="CAI48232">
    <property type="protein sequence ID" value="CAI48232"/>
    <property type="gene ID" value="NP_0282A"/>
</dbReference>
<dbReference type="GeneID" id="3702915"/>
<dbReference type="KEGG" id="nph:NP_0282A"/>
<dbReference type="eggNOG" id="arCOG00627">
    <property type="taxonomic scope" value="Archaea"/>
</dbReference>
<dbReference type="HOGENOM" id="CLU_028760_1_2_2"/>
<dbReference type="OrthoDB" id="295172at2157"/>
<dbReference type="UniPathway" id="UPA00051">
    <property type="reaction ID" value="UER00074"/>
</dbReference>
<dbReference type="Proteomes" id="UP000002698">
    <property type="component" value="Chromosome"/>
</dbReference>
<dbReference type="GO" id="GO:0005737">
    <property type="term" value="C:cytoplasm"/>
    <property type="evidence" value="ECO:0007669"/>
    <property type="project" value="UniProtKB-SubCell"/>
</dbReference>
<dbReference type="GO" id="GO:0004414">
    <property type="term" value="F:homoserine O-acetyltransferase activity"/>
    <property type="evidence" value="ECO:0007669"/>
    <property type="project" value="UniProtKB-UniRule"/>
</dbReference>
<dbReference type="GO" id="GO:0009092">
    <property type="term" value="P:homoserine metabolic process"/>
    <property type="evidence" value="ECO:0007669"/>
    <property type="project" value="TreeGrafter"/>
</dbReference>
<dbReference type="GO" id="GO:0009086">
    <property type="term" value="P:methionine biosynthetic process"/>
    <property type="evidence" value="ECO:0007669"/>
    <property type="project" value="UniProtKB-UniRule"/>
</dbReference>
<dbReference type="Gene3D" id="3.40.50.1820">
    <property type="entry name" value="alpha/beta hydrolase"/>
    <property type="match status" value="1"/>
</dbReference>
<dbReference type="HAMAP" id="MF_00296">
    <property type="entry name" value="MetX_acyltransf"/>
    <property type="match status" value="1"/>
</dbReference>
<dbReference type="InterPro" id="IPR000073">
    <property type="entry name" value="AB_hydrolase_1"/>
</dbReference>
<dbReference type="InterPro" id="IPR029058">
    <property type="entry name" value="AB_hydrolase_fold"/>
</dbReference>
<dbReference type="InterPro" id="IPR008220">
    <property type="entry name" value="HAT_MetX-like"/>
</dbReference>
<dbReference type="NCBIfam" id="TIGR01392">
    <property type="entry name" value="homoserO_Ac_trn"/>
    <property type="match status" value="1"/>
</dbReference>
<dbReference type="NCBIfam" id="NF001209">
    <property type="entry name" value="PRK00175.1"/>
    <property type="match status" value="1"/>
</dbReference>
<dbReference type="PANTHER" id="PTHR32268">
    <property type="entry name" value="HOMOSERINE O-ACETYLTRANSFERASE"/>
    <property type="match status" value="1"/>
</dbReference>
<dbReference type="PANTHER" id="PTHR32268:SF11">
    <property type="entry name" value="HOMOSERINE O-ACETYLTRANSFERASE"/>
    <property type="match status" value="1"/>
</dbReference>
<dbReference type="Pfam" id="PF00561">
    <property type="entry name" value="Abhydrolase_1"/>
    <property type="match status" value="1"/>
</dbReference>
<dbReference type="PIRSF" id="PIRSF000443">
    <property type="entry name" value="Homoser_Ac_trans"/>
    <property type="match status" value="1"/>
</dbReference>
<dbReference type="SUPFAM" id="SSF53474">
    <property type="entry name" value="alpha/beta-Hydrolases"/>
    <property type="match status" value="1"/>
</dbReference>